<name>CASP2_MAIZE</name>
<protein>
    <recommendedName>
        <fullName>Casparian strip membrane protein 2</fullName>
        <shortName>ZmCASP2</shortName>
    </recommendedName>
</protein>
<sequence length="228" mass="23989">MSTSDAAATVIPIDDVPRQHGKAPAVDTVTAAPPPLAAAAPPAATTAPRKTRVPFFRRADRGSRCVALLDLVLRVAAFGPALAAAIATGTSDETLSVFTQFFQFHARFDDFPALLFFMVANAIAAGYLVLSLPFSAVVVLRPQAIGLRHLLLICDLIIAALLTAAAAAAAAIVDLAHSGNQRANWVPICMQFHGFCQRTSGAVVASFLAVLVLLFLVILAAFTIRKRC</sequence>
<proteinExistence type="evidence at transcript level"/>
<comment type="function">
    <text evidence="1">Regulates membrane-cell wall junctions and localized cell wall deposition. Required for establishment of the Casparian strip membrane domain (CSD) and the subsequent formation of Casparian strips, a cell wall modification of the root endodermis that determines an apoplastic barrier between the intraorganismal apoplasm and the extraorganismal apoplasm and prevents lateral diffusion (By similarity).</text>
</comment>
<comment type="subunit">
    <text evidence="1">Homodimer and heterodimers.</text>
</comment>
<comment type="subcellular location">
    <subcellularLocation>
        <location evidence="1">Cell membrane</location>
        <topology evidence="1">Multi-pass membrane protein</topology>
    </subcellularLocation>
    <text evidence="1">Very restricted localization following a belt shape within the plasma membrane which coincides with the position of the Casparian strip membrane domain in the root endodermis.</text>
</comment>
<comment type="similarity">
    <text evidence="3">Belongs to the Casparian strip membrane proteins (CASP) family.</text>
</comment>
<feature type="chain" id="PRO_0000370272" description="Casparian strip membrane protein 2">
    <location>
        <begin position="1"/>
        <end position="228"/>
    </location>
</feature>
<feature type="topological domain" description="Cytoplasmic" evidence="2">
    <location>
        <begin position="1"/>
        <end position="65"/>
    </location>
</feature>
<feature type="transmembrane region" description="Helical" evidence="2">
    <location>
        <begin position="66"/>
        <end position="86"/>
    </location>
</feature>
<feature type="topological domain" description="Extracellular" evidence="2">
    <location>
        <begin position="87"/>
        <end position="113"/>
    </location>
</feature>
<feature type="transmembrane region" description="Helical" evidence="2">
    <location>
        <begin position="114"/>
        <end position="134"/>
    </location>
</feature>
<feature type="topological domain" description="Cytoplasmic" evidence="2">
    <location>
        <begin position="135"/>
        <end position="149"/>
    </location>
</feature>
<feature type="transmembrane region" description="Helical" evidence="2">
    <location>
        <begin position="150"/>
        <end position="170"/>
    </location>
</feature>
<feature type="topological domain" description="Extracellular" evidence="2">
    <location>
        <begin position="171"/>
        <end position="201"/>
    </location>
</feature>
<feature type="transmembrane region" description="Helical" evidence="2">
    <location>
        <begin position="202"/>
        <end position="222"/>
    </location>
</feature>
<feature type="topological domain" description="Cytoplasmic" evidence="2">
    <location>
        <begin position="223"/>
        <end position="228"/>
    </location>
</feature>
<dbReference type="EMBL" id="EU970610">
    <property type="protein sequence ID" value="ACG42728.1"/>
    <property type="molecule type" value="mRNA"/>
</dbReference>
<dbReference type="RefSeq" id="NP_001151404.1">
    <property type="nucleotide sequence ID" value="NM_001157932.2"/>
</dbReference>
<dbReference type="FunCoup" id="B6U045">
    <property type="interactions" value="11"/>
</dbReference>
<dbReference type="STRING" id="4577.B6U045"/>
<dbReference type="PaxDb" id="4577-GRMZM2G382104_P01"/>
<dbReference type="EnsemblPlants" id="Zm00001eb065710_T001">
    <property type="protein sequence ID" value="Zm00001eb065710_P001"/>
    <property type="gene ID" value="Zm00001eb065710"/>
</dbReference>
<dbReference type="GeneID" id="100285037"/>
<dbReference type="Gramene" id="Zm00001eb065710_T001">
    <property type="protein sequence ID" value="Zm00001eb065710_P001"/>
    <property type="gene ID" value="Zm00001eb065710"/>
</dbReference>
<dbReference type="KEGG" id="zma:100285037"/>
<dbReference type="eggNOG" id="ENOG502QSE9">
    <property type="taxonomic scope" value="Eukaryota"/>
</dbReference>
<dbReference type="InParanoid" id="B6U045"/>
<dbReference type="OMA" id="TSANWIA"/>
<dbReference type="OrthoDB" id="753675at2759"/>
<dbReference type="Proteomes" id="UP000007305">
    <property type="component" value="Chromosome 2"/>
</dbReference>
<dbReference type="ExpressionAtlas" id="B6U045">
    <property type="expression patterns" value="baseline and differential"/>
</dbReference>
<dbReference type="GO" id="GO:0005886">
    <property type="term" value="C:plasma membrane"/>
    <property type="evidence" value="ECO:0007669"/>
    <property type="project" value="UniProtKB-SubCell"/>
</dbReference>
<dbReference type="GO" id="GO:0071555">
    <property type="term" value="P:cell wall organization"/>
    <property type="evidence" value="ECO:0007669"/>
    <property type="project" value="UniProtKB-KW"/>
</dbReference>
<dbReference type="InterPro" id="IPR006459">
    <property type="entry name" value="CASP/CASPL"/>
</dbReference>
<dbReference type="InterPro" id="IPR006702">
    <property type="entry name" value="CASP_dom"/>
</dbReference>
<dbReference type="InterPro" id="IPR044173">
    <property type="entry name" value="CASPL"/>
</dbReference>
<dbReference type="NCBIfam" id="TIGR01569">
    <property type="entry name" value="A_tha_TIGR01569"/>
    <property type="match status" value="1"/>
</dbReference>
<dbReference type="PANTHER" id="PTHR36488:SF11">
    <property type="entry name" value="CASP-LIKE PROTEIN"/>
    <property type="match status" value="1"/>
</dbReference>
<dbReference type="PANTHER" id="PTHR36488">
    <property type="entry name" value="CASP-LIKE PROTEIN 1U1"/>
    <property type="match status" value="1"/>
</dbReference>
<dbReference type="Pfam" id="PF04535">
    <property type="entry name" value="CASP_dom"/>
    <property type="match status" value="1"/>
</dbReference>
<evidence type="ECO:0000250" key="1"/>
<evidence type="ECO:0000255" key="2"/>
<evidence type="ECO:0000305" key="3"/>
<keyword id="KW-1003">Cell membrane</keyword>
<keyword id="KW-0961">Cell wall biogenesis/degradation</keyword>
<keyword id="KW-0472">Membrane</keyword>
<keyword id="KW-1185">Reference proteome</keyword>
<keyword id="KW-0812">Transmembrane</keyword>
<keyword id="KW-1133">Transmembrane helix</keyword>
<accession>B6U045</accession>
<reference key="1">
    <citation type="journal article" date="2009" name="Plant Mol. Biol.">
        <title>Insights into corn genes derived from large-scale cDNA sequencing.</title>
        <authorList>
            <person name="Alexandrov N.N."/>
            <person name="Brover V.V."/>
            <person name="Freidin S."/>
            <person name="Troukhan M.E."/>
            <person name="Tatarinova T.V."/>
            <person name="Zhang H."/>
            <person name="Swaller T.J."/>
            <person name="Lu Y.-P."/>
            <person name="Bouck J."/>
            <person name="Flavell R.B."/>
            <person name="Feldmann K.A."/>
        </authorList>
    </citation>
    <scope>NUCLEOTIDE SEQUENCE [LARGE SCALE MRNA]</scope>
</reference>
<reference key="2">
    <citation type="journal article" date="2014" name="Plant Physiol.">
        <title>Functional and evolutionary analysis of the CASPARIAN STRIP MEMBRANE DOMAIN PROTEIN family.</title>
        <authorList>
            <person name="Roppolo D."/>
            <person name="Boeckmann B."/>
            <person name="Pfister A."/>
            <person name="Boutet E."/>
            <person name="Rubio M.C."/>
            <person name="Denervaud-Tendon V."/>
            <person name="Vermeer J.E."/>
            <person name="Gheyselinck J."/>
            <person name="Xenarios I."/>
            <person name="Geldner N."/>
        </authorList>
    </citation>
    <scope>GENE FAMILY</scope>
    <scope>NOMENCLATURE</scope>
</reference>
<organism>
    <name type="scientific">Zea mays</name>
    <name type="common">Maize</name>
    <dbReference type="NCBI Taxonomy" id="4577"/>
    <lineage>
        <taxon>Eukaryota</taxon>
        <taxon>Viridiplantae</taxon>
        <taxon>Streptophyta</taxon>
        <taxon>Embryophyta</taxon>
        <taxon>Tracheophyta</taxon>
        <taxon>Spermatophyta</taxon>
        <taxon>Magnoliopsida</taxon>
        <taxon>Liliopsida</taxon>
        <taxon>Poales</taxon>
        <taxon>Poaceae</taxon>
        <taxon>PACMAD clade</taxon>
        <taxon>Panicoideae</taxon>
        <taxon>Andropogonodae</taxon>
        <taxon>Andropogoneae</taxon>
        <taxon>Tripsacinae</taxon>
        <taxon>Zea</taxon>
    </lineage>
</organism>